<accession>Q99003</accession>
<accession>O30927</accession>
<reference key="1">
    <citation type="journal article" date="1991" name="J. Bacteriol.">
        <title>Identification, characterization, and nucleotide sequence of the F17-G gene, which determines receptor binding of Escherichia coli F17 fimbriae.</title>
        <authorList>
            <person name="Lintermans P.F.L."/>
            <person name="Bertels A."/>
            <person name="Schlicker C."/>
            <person name="Deboeck F."/>
            <person name="Charlier G."/>
            <person name="Pohl P."/>
            <person name="Norgren M."/>
            <person name="Normark S."/>
            <person name="van Montagu M."/>
            <person name="De Greve H.M.J."/>
        </authorList>
    </citation>
    <scope>NUCLEOTIDE SEQUENCE [GENOMIC DNA]</scope>
    <scope>FUNCTION</scope>
    <scope>SIGNAL SEQUENCE CLEAVAGE SITE</scope>
    <scope>SUBCELLULAR LOCATION</scope>
    <source>
        <strain>25KH09st/ ETEC</strain>
    </source>
</reference>
<reference key="2">
    <citation type="journal article" date="2003" name="Mol. Microbiol.">
        <title>The fimbrial adhesin F17-G of enterotoxigenic Escherichia coli has an immunoglobulin-like lectin domain that binds N-acetylglucosamine.</title>
        <authorList>
            <person name="Buts L."/>
            <person name="Bouckaert J."/>
            <person name="De Genst E."/>
            <person name="Loris R."/>
            <person name="Oscarson S."/>
            <person name="Lahmann M."/>
            <person name="Messens J."/>
            <person name="Brosens E."/>
            <person name="Wyns L."/>
            <person name="De Greve H.M.J."/>
        </authorList>
    </citation>
    <scope>X-RAY CRYSTALLOGRAPHY (1.40 ANGSTROMS) OF 23-199 AND IN COMPLEX WITH N-ACETYL-D-GLUCOSAMINE</scope>
    <source>
        <strain>25KH09st/ ETEC</strain>
    </source>
</reference>
<organism>
    <name type="scientific">Escherichia coli</name>
    <dbReference type="NCBI Taxonomy" id="562"/>
    <lineage>
        <taxon>Bacteria</taxon>
        <taxon>Pseudomonadati</taxon>
        <taxon>Pseudomonadota</taxon>
        <taxon>Gammaproteobacteria</taxon>
        <taxon>Enterobacterales</taxon>
        <taxon>Enterobacteriaceae</taxon>
        <taxon>Escherichia</taxon>
    </lineage>
</organism>
<gene>
    <name type="primary">f17aG</name>
</gene>
<proteinExistence type="evidence at protein level"/>
<keyword id="KW-0002">3D-structure</keyword>
<keyword id="KW-1015">Disulfide bond</keyword>
<keyword id="KW-0281">Fimbrium</keyword>
<keyword id="KW-0430">Lectin</keyword>
<keyword id="KW-0732">Signal</keyword>
<keyword id="KW-0843">Virulence</keyword>
<dbReference type="EMBL" id="AF022140">
    <property type="protein sequence ID" value="AAC45722.1"/>
    <property type="molecule type" value="Genomic_DNA"/>
</dbReference>
<dbReference type="PIR" id="A42359">
    <property type="entry name" value="A42359"/>
</dbReference>
<dbReference type="RefSeq" id="WP_061363424.1">
    <property type="nucleotide sequence ID" value="NZ_CAMPSO010000020.1"/>
</dbReference>
<dbReference type="PDB" id="1O9V">
    <property type="method" value="X-ray"/>
    <property type="resolution" value="1.75 A"/>
    <property type="chains" value="A=23-199"/>
</dbReference>
<dbReference type="PDB" id="1O9W">
    <property type="method" value="X-ray"/>
    <property type="resolution" value="1.65 A"/>
    <property type="chains" value="A=23-199"/>
</dbReference>
<dbReference type="PDB" id="1O9Z">
    <property type="method" value="X-ray"/>
    <property type="resolution" value="1.75 A"/>
    <property type="chains" value="A=23-199"/>
</dbReference>
<dbReference type="PDB" id="1ZPL">
    <property type="method" value="X-ray"/>
    <property type="resolution" value="1.70 A"/>
    <property type="chains" value="A/B=23-199"/>
</dbReference>
<dbReference type="PDB" id="2BSC">
    <property type="method" value="X-ray"/>
    <property type="resolution" value="1.40 A"/>
    <property type="chains" value="A=23-199"/>
</dbReference>
<dbReference type="PDB" id="3F64">
    <property type="method" value="X-ray"/>
    <property type="resolution" value="1.95 A"/>
    <property type="chains" value="A=23-199"/>
</dbReference>
<dbReference type="PDB" id="3F6J">
    <property type="method" value="X-ray"/>
    <property type="resolution" value="1.75 A"/>
    <property type="chains" value="A=23-199"/>
</dbReference>
<dbReference type="PDBsum" id="1O9V"/>
<dbReference type="PDBsum" id="1O9W"/>
<dbReference type="PDBsum" id="1O9Z"/>
<dbReference type="PDBsum" id="1ZPL"/>
<dbReference type="PDBsum" id="2BSC"/>
<dbReference type="PDBsum" id="3F64"/>
<dbReference type="PDBsum" id="3F6J"/>
<dbReference type="SMR" id="Q99003"/>
<dbReference type="UniLectin" id="Q99003"/>
<dbReference type="PATRIC" id="fig|562.10497.peg.1043"/>
<dbReference type="EvolutionaryTrace" id="Q99003"/>
<dbReference type="GO" id="GO:0009289">
    <property type="term" value="C:pilus"/>
    <property type="evidence" value="ECO:0007669"/>
    <property type="project" value="UniProtKB-SubCell"/>
</dbReference>
<dbReference type="GO" id="GO:0030246">
    <property type="term" value="F:carbohydrate binding"/>
    <property type="evidence" value="ECO:0007669"/>
    <property type="project" value="UniProtKB-KW"/>
</dbReference>
<dbReference type="GO" id="GO:0044406">
    <property type="term" value="P:adhesion of symbiont to host"/>
    <property type="evidence" value="ECO:0007669"/>
    <property type="project" value="InterPro"/>
</dbReference>
<dbReference type="GO" id="GO:0043709">
    <property type="term" value="P:cell adhesion involved in single-species biofilm formation"/>
    <property type="evidence" value="ECO:0007669"/>
    <property type="project" value="TreeGrafter"/>
</dbReference>
<dbReference type="Gene3D" id="2.60.40.1410">
    <property type="entry name" value="Bacterial adhesins - F17c-type"/>
    <property type="match status" value="1"/>
</dbReference>
<dbReference type="Gene3D" id="2.60.40.1090">
    <property type="entry name" value="Fimbrial-type adhesion domain"/>
    <property type="match status" value="1"/>
</dbReference>
<dbReference type="InterPro" id="IPR000259">
    <property type="entry name" value="Adhesion_dom_fimbrial"/>
</dbReference>
<dbReference type="InterPro" id="IPR036937">
    <property type="entry name" value="Adhesion_dom_fimbrial_sf"/>
</dbReference>
<dbReference type="InterPro" id="IPR008966">
    <property type="entry name" value="Adhesion_dom_sf"/>
</dbReference>
<dbReference type="InterPro" id="IPR050263">
    <property type="entry name" value="Bact_Fimbrial_Adh_Pro"/>
</dbReference>
<dbReference type="InterPro" id="IPR015303">
    <property type="entry name" value="Fimbrial_adhesin_lectin_dom"/>
</dbReference>
<dbReference type="PANTHER" id="PTHR33420">
    <property type="entry name" value="FIMBRIAL SUBUNIT ELFA-RELATED"/>
    <property type="match status" value="1"/>
</dbReference>
<dbReference type="PANTHER" id="PTHR33420:SF14">
    <property type="entry name" value="TYPE 1 FIMBRIN D-MANNOSE SPECIFIC ADHESIN"/>
    <property type="match status" value="1"/>
</dbReference>
<dbReference type="Pfam" id="PF09222">
    <property type="entry name" value="Fim-adh_lectin"/>
    <property type="match status" value="1"/>
</dbReference>
<dbReference type="Pfam" id="PF00419">
    <property type="entry name" value="Fimbrial"/>
    <property type="match status" value="1"/>
</dbReference>
<dbReference type="SUPFAM" id="SSF49401">
    <property type="entry name" value="Bacterial adhesins"/>
    <property type="match status" value="2"/>
</dbReference>
<sequence>MTNFYKVFLAVFILVCCNISQAAVSFIGSTENDVGPSLGSYSRTHAMDNLPFVYDTRNKIGYQNANVWHISKGFCVGLDGKVDLPVVGSLDGQSIYGLTEEVGLLIWMGDTKYSRGTAMSGNSWENVFSGWCVGANTASTQGLSVRVTPVILKRNSSARYSVQKTSIGSIRMRPYNGSSAGSVQTTVNFSLNPFTLNDTVTSCRLLTPSAVNVSLAAISAGQLPSSGDEVVAGTTSLKLQCDAGVTVWATLTDATTPSNRSDILTLTGASTATGVGLRIYKNTDSTPLKFGPDSPVKGNENQWQLSTGTETSPSVRLYVKYVNTGEGINPGTVNGISTFTFSYQ</sequence>
<name>F17AG_ECOLX</name>
<evidence type="ECO:0000256" key="1">
    <source>
        <dbReference type="SAM" id="MobiDB-lite"/>
    </source>
</evidence>
<evidence type="ECO:0000269" key="2">
    <source>
    </source>
</evidence>
<evidence type="ECO:0000305" key="3"/>
<evidence type="ECO:0007829" key="4">
    <source>
        <dbReference type="PDB" id="1ZPL"/>
    </source>
</evidence>
<evidence type="ECO:0007829" key="5">
    <source>
        <dbReference type="PDB" id="2BSC"/>
    </source>
</evidence>
<protein>
    <recommendedName>
        <fullName>F17a-G fimbrial adhesin</fullName>
    </recommendedName>
</protein>
<feature type="signal peptide" evidence="2">
    <location>
        <begin position="1"/>
        <end position="22"/>
    </location>
</feature>
<feature type="chain" id="PRO_5000053432" description="F17a-G fimbrial adhesin">
    <location>
        <begin position="23"/>
        <end position="344"/>
    </location>
</feature>
<feature type="region of interest" description="Receptor-binding lectin domain">
    <location>
        <begin position="23"/>
        <end position="199"/>
    </location>
</feature>
<feature type="region of interest" description="Fimbrillin-binding domain">
    <location>
        <begin position="200"/>
        <end position="344"/>
    </location>
</feature>
<feature type="region of interest" description="Disordered" evidence="1">
    <location>
        <begin position="288"/>
        <end position="308"/>
    </location>
</feature>
<feature type="compositionally biased region" description="Polar residues" evidence="1">
    <location>
        <begin position="299"/>
        <end position="308"/>
    </location>
</feature>
<feature type="binding site">
    <location>
        <begin position="65"/>
        <end position="66"/>
    </location>
    <ligand>
        <name>a carbohydrate</name>
        <dbReference type="ChEBI" id="CHEBI:16646"/>
    </ligand>
</feature>
<feature type="binding site">
    <location>
        <begin position="110"/>
        <end position="111"/>
    </location>
    <ligand>
        <name>a carbohydrate</name>
        <dbReference type="ChEBI" id="CHEBI:16646"/>
    </ligand>
</feature>
<feature type="binding site">
    <location>
        <begin position="139"/>
        <end position="142"/>
    </location>
    <ligand>
        <name>a carbohydrate</name>
        <dbReference type="ChEBI" id="CHEBI:16646"/>
    </ligand>
</feature>
<feature type="disulfide bond">
    <location>
        <begin position="75"/>
        <end position="132"/>
    </location>
</feature>
<feature type="strand" evidence="5">
    <location>
        <begin position="24"/>
        <end position="26"/>
    </location>
</feature>
<feature type="strand" evidence="5">
    <location>
        <begin position="30"/>
        <end position="35"/>
    </location>
</feature>
<feature type="strand" evidence="5">
    <location>
        <begin position="39"/>
        <end position="41"/>
    </location>
</feature>
<feature type="strand" evidence="4">
    <location>
        <begin position="51"/>
        <end position="53"/>
    </location>
</feature>
<feature type="strand" evidence="5">
    <location>
        <begin position="59"/>
        <end position="71"/>
    </location>
</feature>
<feature type="strand" evidence="5">
    <location>
        <begin position="75"/>
        <end position="82"/>
    </location>
</feature>
<feature type="strand" evidence="5">
    <location>
        <begin position="86"/>
        <end position="90"/>
    </location>
</feature>
<feature type="strand" evidence="5">
    <location>
        <begin position="93"/>
        <end position="112"/>
    </location>
</feature>
<feature type="helix" evidence="5">
    <location>
        <begin position="113"/>
        <end position="115"/>
    </location>
</feature>
<feature type="strand" evidence="4">
    <location>
        <begin position="116"/>
        <end position="118"/>
    </location>
</feature>
<feature type="strand" evidence="5">
    <location>
        <begin position="121"/>
        <end position="123"/>
    </location>
</feature>
<feature type="strand" evidence="5">
    <location>
        <begin position="125"/>
        <end position="132"/>
    </location>
</feature>
<feature type="strand" evidence="5">
    <location>
        <begin position="138"/>
        <end position="153"/>
    </location>
</feature>
<feature type="strand" evidence="5">
    <location>
        <begin position="160"/>
        <end position="162"/>
    </location>
</feature>
<feature type="strand" evidence="5">
    <location>
        <begin position="165"/>
        <end position="174"/>
    </location>
</feature>
<feature type="strand" evidence="5">
    <location>
        <begin position="186"/>
        <end position="191"/>
    </location>
</feature>
<feature type="strand" evidence="5">
    <location>
        <begin position="194"/>
        <end position="196"/>
    </location>
</feature>
<comment type="function">
    <text evidence="2">Essential fimbrial adhesion factor that mediates binding to N-acetylglucosamine-containing receptors in the host intestinal microvilli, leading to colonization of the intestinal tissue, and diarrhea or septicemia. Also confers adhesiveness to laminin and basement membranes.</text>
</comment>
<comment type="subcellular location">
    <subcellularLocation>
        <location evidence="2">Fimbrium</location>
    </subcellularLocation>
    <text>Attached to the tip of the fimbrial filaments.</text>
</comment>
<comment type="similarity">
    <text evidence="3">Belongs to the fimbrial protein family.</text>
</comment>